<comment type="function">
    <text evidence="1">Binds to the 23S rRNA.</text>
</comment>
<comment type="subunit">
    <text evidence="1">Part of the 50S ribosomal subunit.</text>
</comment>
<comment type="similarity">
    <text evidence="1">Belongs to the universal ribosomal protein uL15 family.</text>
</comment>
<evidence type="ECO:0000255" key="1">
    <source>
        <dbReference type="HAMAP-Rule" id="MF_01341"/>
    </source>
</evidence>
<evidence type="ECO:0000256" key="2">
    <source>
        <dbReference type="SAM" id="MobiDB-lite"/>
    </source>
</evidence>
<evidence type="ECO:0000305" key="3"/>
<name>RL15_FRATT</name>
<feature type="chain" id="PRO_0000104724" description="Large ribosomal subunit protein uL15">
    <location>
        <begin position="1"/>
        <end position="143"/>
    </location>
</feature>
<feature type="region of interest" description="Disordered" evidence="2">
    <location>
        <begin position="1"/>
        <end position="52"/>
    </location>
</feature>
<feature type="compositionally biased region" description="Gly residues" evidence="2">
    <location>
        <begin position="21"/>
        <end position="31"/>
    </location>
</feature>
<keyword id="KW-1185">Reference proteome</keyword>
<keyword id="KW-0687">Ribonucleoprotein</keyword>
<keyword id="KW-0689">Ribosomal protein</keyword>
<keyword id="KW-0694">RNA-binding</keyword>
<keyword id="KW-0699">rRNA-binding</keyword>
<accession>Q5NHU9</accession>
<organism>
    <name type="scientific">Francisella tularensis subsp. tularensis (strain SCHU S4 / Schu 4)</name>
    <dbReference type="NCBI Taxonomy" id="177416"/>
    <lineage>
        <taxon>Bacteria</taxon>
        <taxon>Pseudomonadati</taxon>
        <taxon>Pseudomonadota</taxon>
        <taxon>Gammaproteobacteria</taxon>
        <taxon>Thiotrichales</taxon>
        <taxon>Francisellaceae</taxon>
        <taxon>Francisella</taxon>
    </lineage>
</organism>
<proteinExistence type="inferred from homology"/>
<protein>
    <recommendedName>
        <fullName evidence="1">Large ribosomal subunit protein uL15</fullName>
    </recommendedName>
    <alternativeName>
        <fullName evidence="3">50S ribosomal protein L15</fullName>
    </alternativeName>
</protein>
<dbReference type="EMBL" id="AJ749949">
    <property type="protein sequence ID" value="CAG44977.1"/>
    <property type="molecule type" value="Genomic_DNA"/>
</dbReference>
<dbReference type="RefSeq" id="WP_003021585.1">
    <property type="nucleotide sequence ID" value="NZ_CP010290.1"/>
</dbReference>
<dbReference type="RefSeq" id="YP_169393.1">
    <property type="nucleotide sequence ID" value="NC_006570.2"/>
</dbReference>
<dbReference type="SMR" id="Q5NHU9"/>
<dbReference type="STRING" id="177416.FTT_0344"/>
<dbReference type="DNASU" id="3192010"/>
<dbReference type="EnsemblBacteria" id="CAG44977">
    <property type="protein sequence ID" value="CAG44977"/>
    <property type="gene ID" value="FTT_0344"/>
</dbReference>
<dbReference type="KEGG" id="ftu:FTT_0344"/>
<dbReference type="eggNOG" id="COG0200">
    <property type="taxonomic scope" value="Bacteria"/>
</dbReference>
<dbReference type="OrthoDB" id="9810293at2"/>
<dbReference type="Proteomes" id="UP000001174">
    <property type="component" value="Chromosome"/>
</dbReference>
<dbReference type="GO" id="GO:0022625">
    <property type="term" value="C:cytosolic large ribosomal subunit"/>
    <property type="evidence" value="ECO:0007669"/>
    <property type="project" value="TreeGrafter"/>
</dbReference>
<dbReference type="GO" id="GO:0019843">
    <property type="term" value="F:rRNA binding"/>
    <property type="evidence" value="ECO:0007669"/>
    <property type="project" value="UniProtKB-UniRule"/>
</dbReference>
<dbReference type="GO" id="GO:0003735">
    <property type="term" value="F:structural constituent of ribosome"/>
    <property type="evidence" value="ECO:0007669"/>
    <property type="project" value="InterPro"/>
</dbReference>
<dbReference type="GO" id="GO:0006412">
    <property type="term" value="P:translation"/>
    <property type="evidence" value="ECO:0007669"/>
    <property type="project" value="UniProtKB-UniRule"/>
</dbReference>
<dbReference type="Gene3D" id="3.100.10.10">
    <property type="match status" value="1"/>
</dbReference>
<dbReference type="HAMAP" id="MF_01341">
    <property type="entry name" value="Ribosomal_uL15"/>
    <property type="match status" value="1"/>
</dbReference>
<dbReference type="InterPro" id="IPR030878">
    <property type="entry name" value="Ribosomal_uL15"/>
</dbReference>
<dbReference type="InterPro" id="IPR021131">
    <property type="entry name" value="Ribosomal_uL15/eL18"/>
</dbReference>
<dbReference type="InterPro" id="IPR036227">
    <property type="entry name" value="Ribosomal_uL15/eL18_sf"/>
</dbReference>
<dbReference type="InterPro" id="IPR005749">
    <property type="entry name" value="Ribosomal_uL15_bac-type"/>
</dbReference>
<dbReference type="InterPro" id="IPR001196">
    <property type="entry name" value="Ribosomal_uL15_CS"/>
</dbReference>
<dbReference type="NCBIfam" id="TIGR01071">
    <property type="entry name" value="rplO_bact"/>
    <property type="match status" value="1"/>
</dbReference>
<dbReference type="PANTHER" id="PTHR12934">
    <property type="entry name" value="50S RIBOSOMAL PROTEIN L15"/>
    <property type="match status" value="1"/>
</dbReference>
<dbReference type="PANTHER" id="PTHR12934:SF11">
    <property type="entry name" value="LARGE RIBOSOMAL SUBUNIT PROTEIN UL15M"/>
    <property type="match status" value="1"/>
</dbReference>
<dbReference type="Pfam" id="PF00828">
    <property type="entry name" value="Ribosomal_L27A"/>
    <property type="match status" value="1"/>
</dbReference>
<dbReference type="SUPFAM" id="SSF52080">
    <property type="entry name" value="Ribosomal proteins L15p and L18e"/>
    <property type="match status" value="1"/>
</dbReference>
<dbReference type="PROSITE" id="PS00475">
    <property type="entry name" value="RIBOSOMAL_L15"/>
    <property type="match status" value="1"/>
</dbReference>
<reference key="1">
    <citation type="journal article" date="2005" name="Nat. Genet.">
        <title>The complete genome sequence of Francisella tularensis, the causative agent of tularemia.</title>
        <authorList>
            <person name="Larsson P."/>
            <person name="Oyston P.C.F."/>
            <person name="Chain P."/>
            <person name="Chu M.C."/>
            <person name="Duffield M."/>
            <person name="Fuxelius H.-H."/>
            <person name="Garcia E."/>
            <person name="Haelltorp G."/>
            <person name="Johansson D."/>
            <person name="Isherwood K.E."/>
            <person name="Karp P.D."/>
            <person name="Larsson E."/>
            <person name="Liu Y."/>
            <person name="Michell S."/>
            <person name="Prior J."/>
            <person name="Prior R."/>
            <person name="Malfatti S."/>
            <person name="Sjoestedt A."/>
            <person name="Svensson K."/>
            <person name="Thompson N."/>
            <person name="Vergez L."/>
            <person name="Wagg J.K."/>
            <person name="Wren B.W."/>
            <person name="Lindler L.E."/>
            <person name="Andersson S.G.E."/>
            <person name="Forsman M."/>
            <person name="Titball R.W."/>
        </authorList>
    </citation>
    <scope>NUCLEOTIDE SEQUENCE [LARGE SCALE GENOMIC DNA]</scope>
    <source>
        <strain>SCHU S4 / Schu 4</strain>
    </source>
</reference>
<gene>
    <name evidence="1" type="primary">rplO</name>
    <name type="ordered locus">FTT_0344</name>
</gene>
<sequence>MKLNTLAPAAGSKSAPKRLGRGIGSGLGKTSGKGHKGQKARSGGYHKVGFEGGQMPLQRRLPKFGFTSASKGYVAEIRLHELNNVVADEVTLDTLKDFGLIRKDIKTVKVIASGEIQKAVSLKGIACTKGAKEAIEKAGGKVE</sequence>